<proteinExistence type="inferred from homology"/>
<evidence type="ECO:0000250" key="1"/>
<evidence type="ECO:0000255" key="2">
    <source>
        <dbReference type="PROSITE-ProRule" id="PRU01251"/>
    </source>
</evidence>
<evidence type="ECO:0000305" key="3"/>
<protein>
    <recommendedName>
        <fullName>Chaperone protein ClpB 1</fullName>
    </recommendedName>
</protein>
<keyword id="KW-0067">ATP-binding</keyword>
<keyword id="KW-0143">Chaperone</keyword>
<keyword id="KW-0175">Coiled coil</keyword>
<keyword id="KW-0963">Cytoplasm</keyword>
<keyword id="KW-0547">Nucleotide-binding</keyword>
<keyword id="KW-1185">Reference proteome</keyword>
<keyword id="KW-0677">Repeat</keyword>
<keyword id="KW-0346">Stress response</keyword>
<sequence length="898" mass="101392">MQPTDPTKFTEQAWDAIVKSQEVARRYKNTNLEVEHILLALLEQDMGLAARIFQRAAVDGEGLRQQLEIFTNRQPKQAYVEQLYLGRSLDVMLDRADAARSSWEDKFISVEHLLVGFAEDDRVGRKTLRAFNLDPQDLELAIKAIRGSQKVTEPNQEEKYEALDKYGRDLTEQARQGKLDPVIGRDEEIRRVIQVLSRRSKNNPVLIGEPGVGKTAIAEGLAQRIINGDVPESLKNRQLISLDMGSLIAGAKYRGEFEERLRSVMKEVTNSDGQIILFIDEVHTVVGAGGREGSGSMDAGNLLKPMLARGELRCIGATTLDEYRKNIEKDPALERRFQQVYVKQPSVDDTISILRGLKEKYEVHHGVKITDSALVAAATLSHRYIQDRFLPDKAIDLVDEAAARLKMEITSKPVELEDIDRRLMQLQMEKLSLEGEEKRPGLGADKSSKERLEKIQQEITELEGQQQELSGQWLSEKQMLEEINTLKEKEQELRLQVEKAERATDWEKAAKIKYGELEVLQHDIEEKESKLLEIQGSGNTLLREQVTESDIAEIVAGWTGIPMNRLMETERQKLLQLEGHLHQRVIGQKEAVAAVSAAIRRARAGMKDPSRPIGSFLFMGPTGVGKTELARALAGFLFDSEEAMVRIDMSEYMEKHAVSRLIGAPPGYVGYEEGGQLSEAVRRRPYSVVLLDEVEKAHLDVFNILLQVLDDGRITDSQGRVVDFRNTIIVMTSNIGSDHILSLSADDADYDKMQKQVLQSLRKHFRPEFLNRIDDLIIFHTLKRDELRRIVVLQIKRIEKLLDEQKITLSLSDAALDHIVSAGYDPTYGARPLKRAIQRQLENPIATKILENTFVAGDKILIDCVDGQLIFDKEIEPTTLPEEPEENITAVEVEVLSS</sequence>
<feature type="chain" id="PRO_0000191192" description="Chaperone protein ClpB 1">
    <location>
        <begin position="1"/>
        <end position="898"/>
    </location>
</feature>
<feature type="domain" description="Clp R" evidence="2">
    <location>
        <begin position="6"/>
        <end position="148"/>
    </location>
</feature>
<feature type="region of interest" description="Repeat 1" evidence="2">
    <location>
        <begin position="9"/>
        <end position="74"/>
    </location>
</feature>
<feature type="region of interest" description="Repeat 2" evidence="2">
    <location>
        <begin position="85"/>
        <end position="148"/>
    </location>
</feature>
<feature type="region of interest" description="NBD1" evidence="1">
    <location>
        <begin position="161"/>
        <end position="344"/>
    </location>
</feature>
<feature type="region of interest" description="Linker" evidence="1">
    <location>
        <begin position="345"/>
        <end position="560"/>
    </location>
</feature>
<feature type="region of interest" description="NBD2" evidence="1">
    <location>
        <begin position="570"/>
        <end position="781"/>
    </location>
</feature>
<feature type="region of interest" description="C-terminal" evidence="1">
    <location>
        <begin position="782"/>
        <end position="898"/>
    </location>
</feature>
<feature type="coiled-coil region" evidence="1">
    <location>
        <begin position="395"/>
        <end position="536"/>
    </location>
</feature>
<feature type="binding site" evidence="1">
    <location>
        <begin position="208"/>
        <end position="215"/>
    </location>
    <ligand>
        <name>ATP</name>
        <dbReference type="ChEBI" id="CHEBI:30616"/>
        <label>1</label>
    </ligand>
</feature>
<feature type="binding site" evidence="1">
    <location>
        <begin position="620"/>
        <end position="627"/>
    </location>
    <ligand>
        <name>ATP</name>
        <dbReference type="ChEBI" id="CHEBI:30616"/>
        <label>2</label>
    </ligand>
</feature>
<gene>
    <name type="primary">clpB1</name>
    <name type="ordered locus">slr0156</name>
</gene>
<accession>P74459</accession>
<comment type="function">
    <text evidence="1">Part of a stress-induced multi-chaperone system, it is involved in the recovery of the cell from heat-induced damage, in cooperation with DnaK, DnaJ and GrpE. Acts before DnaK, in the processing of protein aggregates. Protein binding stimulates the ATPase activity; ATP hydrolysis unfolds the denatured protein aggregates, which probably helps expose new hydrophobic binding sites on the surface of ClpB-bound aggregates, contributing to the solubilization and refolding of denatured protein aggregates by DnaK (By similarity).</text>
</comment>
<comment type="subunit">
    <text evidence="1">Homohexamer. The oligomerization is ATP-dependent (By similarity).</text>
</comment>
<comment type="subcellular location">
    <subcellularLocation>
        <location evidence="3">Cytoplasm</location>
    </subcellularLocation>
</comment>
<comment type="domain">
    <text evidence="1">The Clp repeat (R) domain probably functions as a substrate-discriminating domain, recruiting aggregated proteins to the ClpB hexamer and/or stabilizing bound proteins. The NBD2 domain is responsible for oligomerization, whereas the NBD1 domain stabilizes the hexamer probably in an ATP-dependent manner. The movement of the coiled-coil domain is essential for ClpB ability to rescue proteins from an aggregated state, probably by pulling apart large aggregated proteins, which are bound between the coiled-coils motifs of adjacent ClpB subunits in the functional hexamer (By similarity).</text>
</comment>
<comment type="similarity">
    <text evidence="3">Belongs to the ClpA/ClpB family.</text>
</comment>
<name>CLPB1_SYNY3</name>
<dbReference type="EMBL" id="BA000022">
    <property type="protein sequence ID" value="BAA18560.1"/>
    <property type="molecule type" value="Genomic_DNA"/>
</dbReference>
<dbReference type="PIR" id="S76431">
    <property type="entry name" value="S76431"/>
</dbReference>
<dbReference type="SMR" id="P74459"/>
<dbReference type="DIP" id="DIP-48813N"/>
<dbReference type="IntAct" id="P74459">
    <property type="interactions" value="3"/>
</dbReference>
<dbReference type="STRING" id="1148.gene:10499442"/>
<dbReference type="PaxDb" id="1148-1653648"/>
<dbReference type="EnsemblBacteria" id="BAA18560">
    <property type="protein sequence ID" value="BAA18560"/>
    <property type="gene ID" value="BAA18560"/>
</dbReference>
<dbReference type="KEGG" id="syn:slr0156"/>
<dbReference type="eggNOG" id="COG0542">
    <property type="taxonomic scope" value="Bacteria"/>
</dbReference>
<dbReference type="InParanoid" id="P74459"/>
<dbReference type="PhylomeDB" id="P74459"/>
<dbReference type="Proteomes" id="UP000001425">
    <property type="component" value="Chromosome"/>
</dbReference>
<dbReference type="GO" id="GO:0005737">
    <property type="term" value="C:cytoplasm"/>
    <property type="evidence" value="ECO:0000318"/>
    <property type="project" value="GO_Central"/>
</dbReference>
<dbReference type="GO" id="GO:0005524">
    <property type="term" value="F:ATP binding"/>
    <property type="evidence" value="ECO:0007669"/>
    <property type="project" value="UniProtKB-KW"/>
</dbReference>
<dbReference type="GO" id="GO:0016887">
    <property type="term" value="F:ATP hydrolysis activity"/>
    <property type="evidence" value="ECO:0000318"/>
    <property type="project" value="GO_Central"/>
</dbReference>
<dbReference type="GO" id="GO:0034605">
    <property type="term" value="P:cellular response to heat"/>
    <property type="evidence" value="ECO:0000318"/>
    <property type="project" value="GO_Central"/>
</dbReference>
<dbReference type="GO" id="GO:0042026">
    <property type="term" value="P:protein refolding"/>
    <property type="evidence" value="ECO:0007669"/>
    <property type="project" value="InterPro"/>
</dbReference>
<dbReference type="CDD" id="cd00009">
    <property type="entry name" value="AAA"/>
    <property type="match status" value="1"/>
</dbReference>
<dbReference type="CDD" id="cd19499">
    <property type="entry name" value="RecA-like_ClpB_Hsp104-like"/>
    <property type="match status" value="1"/>
</dbReference>
<dbReference type="FunFam" id="1.10.8.60:FF:000017">
    <property type="entry name" value="ATP-dependent chaperone ClpB"/>
    <property type="match status" value="1"/>
</dbReference>
<dbReference type="FunFam" id="3.40.50.300:FF:000120">
    <property type="entry name" value="ATP-dependent chaperone ClpB"/>
    <property type="match status" value="1"/>
</dbReference>
<dbReference type="FunFam" id="3.40.50.300:FF:000025">
    <property type="entry name" value="ATP-dependent Clp protease subunit"/>
    <property type="match status" value="1"/>
</dbReference>
<dbReference type="FunFam" id="3.40.50.300:FF:000010">
    <property type="entry name" value="Chaperone clpB 1, putative"/>
    <property type="match status" value="1"/>
</dbReference>
<dbReference type="Gene3D" id="1.10.8.60">
    <property type="match status" value="1"/>
</dbReference>
<dbReference type="Gene3D" id="1.10.1780.10">
    <property type="entry name" value="Clp, N-terminal domain"/>
    <property type="match status" value="1"/>
</dbReference>
<dbReference type="Gene3D" id="3.40.50.300">
    <property type="entry name" value="P-loop containing nucleotide triphosphate hydrolases"/>
    <property type="match status" value="3"/>
</dbReference>
<dbReference type="InterPro" id="IPR003593">
    <property type="entry name" value="AAA+_ATPase"/>
</dbReference>
<dbReference type="InterPro" id="IPR003959">
    <property type="entry name" value="ATPase_AAA_core"/>
</dbReference>
<dbReference type="InterPro" id="IPR017730">
    <property type="entry name" value="Chaperonin_ClpB"/>
</dbReference>
<dbReference type="InterPro" id="IPR019489">
    <property type="entry name" value="Clp_ATPase_C"/>
</dbReference>
<dbReference type="InterPro" id="IPR036628">
    <property type="entry name" value="Clp_N_dom_sf"/>
</dbReference>
<dbReference type="InterPro" id="IPR004176">
    <property type="entry name" value="Clp_R_dom"/>
</dbReference>
<dbReference type="InterPro" id="IPR001270">
    <property type="entry name" value="ClpA/B"/>
</dbReference>
<dbReference type="InterPro" id="IPR018368">
    <property type="entry name" value="ClpA/B_CS1"/>
</dbReference>
<dbReference type="InterPro" id="IPR028299">
    <property type="entry name" value="ClpA/B_CS2"/>
</dbReference>
<dbReference type="InterPro" id="IPR041546">
    <property type="entry name" value="ClpA/ClpB_AAA_lid"/>
</dbReference>
<dbReference type="InterPro" id="IPR050130">
    <property type="entry name" value="ClpA_ClpB"/>
</dbReference>
<dbReference type="InterPro" id="IPR027417">
    <property type="entry name" value="P-loop_NTPase"/>
</dbReference>
<dbReference type="NCBIfam" id="TIGR03346">
    <property type="entry name" value="chaperone_ClpB"/>
    <property type="match status" value="1"/>
</dbReference>
<dbReference type="PANTHER" id="PTHR11638">
    <property type="entry name" value="ATP-DEPENDENT CLP PROTEASE"/>
    <property type="match status" value="1"/>
</dbReference>
<dbReference type="PANTHER" id="PTHR11638:SF18">
    <property type="entry name" value="HEAT SHOCK PROTEIN 104"/>
    <property type="match status" value="1"/>
</dbReference>
<dbReference type="Pfam" id="PF00004">
    <property type="entry name" value="AAA"/>
    <property type="match status" value="1"/>
</dbReference>
<dbReference type="Pfam" id="PF07724">
    <property type="entry name" value="AAA_2"/>
    <property type="match status" value="1"/>
</dbReference>
<dbReference type="Pfam" id="PF17871">
    <property type="entry name" value="AAA_lid_9"/>
    <property type="match status" value="1"/>
</dbReference>
<dbReference type="Pfam" id="PF02861">
    <property type="entry name" value="Clp_N"/>
    <property type="match status" value="2"/>
</dbReference>
<dbReference type="Pfam" id="PF10431">
    <property type="entry name" value="ClpB_D2-small"/>
    <property type="match status" value="1"/>
</dbReference>
<dbReference type="PRINTS" id="PR00300">
    <property type="entry name" value="CLPPROTEASEA"/>
</dbReference>
<dbReference type="SMART" id="SM00382">
    <property type="entry name" value="AAA"/>
    <property type="match status" value="2"/>
</dbReference>
<dbReference type="SMART" id="SM01086">
    <property type="entry name" value="ClpB_D2-small"/>
    <property type="match status" value="1"/>
</dbReference>
<dbReference type="SUPFAM" id="SSF81923">
    <property type="entry name" value="Double Clp-N motif"/>
    <property type="match status" value="1"/>
</dbReference>
<dbReference type="SUPFAM" id="SSF52540">
    <property type="entry name" value="P-loop containing nucleoside triphosphate hydrolases"/>
    <property type="match status" value="2"/>
</dbReference>
<dbReference type="PROSITE" id="PS51903">
    <property type="entry name" value="CLP_R"/>
    <property type="match status" value="1"/>
</dbReference>
<dbReference type="PROSITE" id="PS00870">
    <property type="entry name" value="CLPAB_1"/>
    <property type="match status" value="1"/>
</dbReference>
<dbReference type="PROSITE" id="PS00871">
    <property type="entry name" value="CLPAB_2"/>
    <property type="match status" value="1"/>
</dbReference>
<organism>
    <name type="scientific">Synechocystis sp. (strain ATCC 27184 / PCC 6803 / Kazusa)</name>
    <dbReference type="NCBI Taxonomy" id="1111708"/>
    <lineage>
        <taxon>Bacteria</taxon>
        <taxon>Bacillati</taxon>
        <taxon>Cyanobacteriota</taxon>
        <taxon>Cyanophyceae</taxon>
        <taxon>Synechococcales</taxon>
        <taxon>Merismopediaceae</taxon>
        <taxon>Synechocystis</taxon>
    </lineage>
</organism>
<reference key="1">
    <citation type="journal article" date="1996" name="DNA Res.">
        <title>Sequence analysis of the genome of the unicellular cyanobacterium Synechocystis sp. strain PCC6803. II. Sequence determination of the entire genome and assignment of potential protein-coding regions.</title>
        <authorList>
            <person name="Kaneko T."/>
            <person name="Sato S."/>
            <person name="Kotani H."/>
            <person name="Tanaka A."/>
            <person name="Asamizu E."/>
            <person name="Nakamura Y."/>
            <person name="Miyajima N."/>
            <person name="Hirosawa M."/>
            <person name="Sugiura M."/>
            <person name="Sasamoto S."/>
            <person name="Kimura T."/>
            <person name="Hosouchi T."/>
            <person name="Matsuno A."/>
            <person name="Muraki A."/>
            <person name="Nakazaki N."/>
            <person name="Naruo K."/>
            <person name="Okumura S."/>
            <person name="Shimpo S."/>
            <person name="Takeuchi C."/>
            <person name="Wada T."/>
            <person name="Watanabe A."/>
            <person name="Yamada M."/>
            <person name="Yasuda M."/>
            <person name="Tabata S."/>
        </authorList>
    </citation>
    <scope>NUCLEOTIDE SEQUENCE [LARGE SCALE GENOMIC DNA]</scope>
    <source>
        <strain>ATCC 27184 / PCC 6803 / Kazusa</strain>
    </source>
</reference>